<dbReference type="EMBL" id="DS499598">
    <property type="protein sequence ID" value="EDP50191.1"/>
    <property type="molecule type" value="Genomic_DNA"/>
</dbReference>
<dbReference type="SMR" id="B0Y606"/>
<dbReference type="EnsemblFungi" id="EDP50191">
    <property type="protein sequence ID" value="EDP50191"/>
    <property type="gene ID" value="AFUB_065230"/>
</dbReference>
<dbReference type="VEuPathDB" id="FungiDB:AFUB_065230"/>
<dbReference type="HOGENOM" id="CLU_087356_0_2_1"/>
<dbReference type="OrthoDB" id="108339at5052"/>
<dbReference type="PhylomeDB" id="B0Y606"/>
<dbReference type="Proteomes" id="UP000001699">
    <property type="component" value="Unassembled WGS sequence"/>
</dbReference>
<dbReference type="GO" id="GO:0031966">
    <property type="term" value="C:mitochondrial membrane"/>
    <property type="evidence" value="ECO:0007669"/>
    <property type="project" value="UniProtKB-SubCell"/>
</dbReference>
<dbReference type="GO" id="GO:0097250">
    <property type="term" value="P:mitochondrial respirasome assembly"/>
    <property type="evidence" value="ECO:0007669"/>
    <property type="project" value="TreeGrafter"/>
</dbReference>
<dbReference type="Gene3D" id="6.10.140.1320">
    <property type="match status" value="1"/>
</dbReference>
<dbReference type="InterPro" id="IPR007667">
    <property type="entry name" value="Hypoxia_induced_domain"/>
</dbReference>
<dbReference type="InterPro" id="IPR050355">
    <property type="entry name" value="RCF1"/>
</dbReference>
<dbReference type="PANTHER" id="PTHR12297:SF3">
    <property type="entry name" value="HIG1 DOMAIN FAMILY MEMBER 1A"/>
    <property type="match status" value="1"/>
</dbReference>
<dbReference type="PANTHER" id="PTHR12297">
    <property type="entry name" value="HYPOXIA-INDUCBILE GENE 1 HIG1 -RELATED"/>
    <property type="match status" value="1"/>
</dbReference>
<dbReference type="Pfam" id="PF04588">
    <property type="entry name" value="HIG_1_N"/>
    <property type="match status" value="1"/>
</dbReference>
<dbReference type="PROSITE" id="PS51503">
    <property type="entry name" value="HIG1"/>
    <property type="match status" value="1"/>
</dbReference>
<accession>B0Y606</accession>
<comment type="function">
    <text evidence="1">Cytochrome c oxidase subunit which plays a role in assembly of respiratory supercomplexes.</text>
</comment>
<comment type="subunit">
    <text evidence="1">Associates with the respiratory chain complex III/complex IV supercomplex.</text>
</comment>
<comment type="subcellular location">
    <subcellularLocation>
        <location evidence="2">Mitochondrion membrane</location>
        <topology evidence="2">Multi-pass membrane protein</topology>
    </subcellularLocation>
</comment>
<comment type="similarity">
    <text evidence="4">Belongs to the RCF1 family.</text>
</comment>
<sequence length="181" mass="21173">MLNEPLPSSMEDNPQFKEETSLQKFRRRLKEEPLIPLGCAATCYALYRAYRSMKAGDSVEMNKMFRARIYAQFFTLVAVVAGGMYYKTERQQRREFEKMVEQRKAQEKRDAWLRELEIRDKEDKDWRERHAAIEAAAKEAGKRPAPKKLPEQDAARSAIEPADERSIGVLSAVRDLWMQQK</sequence>
<reference key="1">
    <citation type="journal article" date="2008" name="PLoS Genet.">
        <title>Genomic islands in the pathogenic filamentous fungus Aspergillus fumigatus.</title>
        <authorList>
            <person name="Fedorova N.D."/>
            <person name="Khaldi N."/>
            <person name="Joardar V.S."/>
            <person name="Maiti R."/>
            <person name="Amedeo P."/>
            <person name="Anderson M.J."/>
            <person name="Crabtree J."/>
            <person name="Silva J.C."/>
            <person name="Badger J.H."/>
            <person name="Albarraq A."/>
            <person name="Angiuoli S."/>
            <person name="Bussey H."/>
            <person name="Bowyer P."/>
            <person name="Cotty P.J."/>
            <person name="Dyer P.S."/>
            <person name="Egan A."/>
            <person name="Galens K."/>
            <person name="Fraser-Liggett C.M."/>
            <person name="Haas B.J."/>
            <person name="Inman J.M."/>
            <person name="Kent R."/>
            <person name="Lemieux S."/>
            <person name="Malavazi I."/>
            <person name="Orvis J."/>
            <person name="Roemer T."/>
            <person name="Ronning C.M."/>
            <person name="Sundaram J.P."/>
            <person name="Sutton G."/>
            <person name="Turner G."/>
            <person name="Venter J.C."/>
            <person name="White O.R."/>
            <person name="Whitty B.R."/>
            <person name="Youngman P."/>
            <person name="Wolfe K.H."/>
            <person name="Goldman G.H."/>
            <person name="Wortman J.R."/>
            <person name="Jiang B."/>
            <person name="Denning D.W."/>
            <person name="Nierman W.C."/>
        </authorList>
    </citation>
    <scope>NUCLEOTIDE SEQUENCE [LARGE SCALE GENOMIC DNA]</scope>
    <source>
        <strain>CBS 144.89 / FGSC A1163 / CEA10</strain>
    </source>
</reference>
<keyword id="KW-0472">Membrane</keyword>
<keyword id="KW-0496">Mitochondrion</keyword>
<keyword id="KW-0812">Transmembrane</keyword>
<keyword id="KW-1133">Transmembrane helix</keyword>
<proteinExistence type="inferred from homology"/>
<feature type="chain" id="PRO_0000399618" description="Respiratory supercomplex factor 1, mitochondrial">
    <location>
        <begin position="1"/>
        <end position="181"/>
    </location>
</feature>
<feature type="transmembrane region" description="Helical" evidence="2">
    <location>
        <begin position="33"/>
        <end position="49"/>
    </location>
</feature>
<feature type="transmembrane region" description="Helical" evidence="2">
    <location>
        <begin position="69"/>
        <end position="86"/>
    </location>
</feature>
<feature type="domain" description="HIG1" evidence="2">
    <location>
        <begin position="6"/>
        <end position="97"/>
    </location>
</feature>
<feature type="region of interest" description="Disordered" evidence="3">
    <location>
        <begin position="134"/>
        <end position="161"/>
    </location>
</feature>
<feature type="compositionally biased region" description="Basic and acidic residues" evidence="3">
    <location>
        <begin position="134"/>
        <end position="154"/>
    </location>
</feature>
<evidence type="ECO:0000250" key="1"/>
<evidence type="ECO:0000255" key="2">
    <source>
        <dbReference type="PROSITE-ProRule" id="PRU00836"/>
    </source>
</evidence>
<evidence type="ECO:0000256" key="3">
    <source>
        <dbReference type="SAM" id="MobiDB-lite"/>
    </source>
</evidence>
<evidence type="ECO:0000305" key="4"/>
<protein>
    <recommendedName>
        <fullName>Respiratory supercomplex factor 1, mitochondrial</fullName>
    </recommendedName>
</protein>
<organism>
    <name type="scientific">Aspergillus fumigatus (strain CBS 144.89 / FGSC A1163 / CEA10)</name>
    <name type="common">Neosartorya fumigata</name>
    <dbReference type="NCBI Taxonomy" id="451804"/>
    <lineage>
        <taxon>Eukaryota</taxon>
        <taxon>Fungi</taxon>
        <taxon>Dikarya</taxon>
        <taxon>Ascomycota</taxon>
        <taxon>Pezizomycotina</taxon>
        <taxon>Eurotiomycetes</taxon>
        <taxon>Eurotiomycetidae</taxon>
        <taxon>Eurotiales</taxon>
        <taxon>Aspergillaceae</taxon>
        <taxon>Aspergillus</taxon>
        <taxon>Aspergillus subgen. Fumigati</taxon>
    </lineage>
</organism>
<gene>
    <name type="primary">rcf1</name>
    <name type="synonym">aim31</name>
    <name type="ORF">AFUB_065230</name>
</gene>
<name>RCF1_ASPFC</name>